<organism>
    <name type="scientific">Homo sapiens</name>
    <name type="common">Human</name>
    <dbReference type="NCBI Taxonomy" id="9606"/>
    <lineage>
        <taxon>Eukaryota</taxon>
        <taxon>Metazoa</taxon>
        <taxon>Chordata</taxon>
        <taxon>Craniata</taxon>
        <taxon>Vertebrata</taxon>
        <taxon>Euteleostomi</taxon>
        <taxon>Mammalia</taxon>
        <taxon>Eutheria</taxon>
        <taxon>Euarchontoglires</taxon>
        <taxon>Primates</taxon>
        <taxon>Haplorrhini</taxon>
        <taxon>Catarrhini</taxon>
        <taxon>Hominidae</taxon>
        <taxon>Homo</taxon>
    </lineage>
</organism>
<proteinExistence type="evidence at protein level"/>
<sequence>MVAEVDSMPAASSVKKPFVLRSKMGKWCRHCFPCCRGSGKSNVGTSGDQDDSTMKTLRSKMGKWCCHCFPCCRGSGKSNVGAWGDYDDSAFVEPRYHVRREDLDKLHRAAWWGKVARKDLIVMLRDTDVNKQDKQKRTALHLASANGNSGVVKLLLDRRCQLNVLDNKKRTALTKAVQCQEDECALMLLEHGTDPNIPDEYGNTTLHYAIYNEDKLMAKALLLYGADIESKNKHGLTPLLLGVHEQKQQVVKFLIKKKANLNALDRYGRTALILAVCCGSASIVSLLLEQNIDVSSQDLSGQTAREYAVSSHHHVICQLLSDYKEKQMLKISSENSNPEQDLKLTSEEESQRFKGSENSQPEKMSQEPEINKDGDREVEEEMKKHESNNVGLLENLSNGVTAGNGDDGLIPQRKSRTPENQQFPDNESEEYHRICELVSDYKEKQMPKYSSENSNPEQDLKLTSEEESQRLKGSENGQPEKRSQEPEINKDGDRELENFMAIEEMKKHGSTHVGFPENLTNGATAGNGDDGLIPPRKSRTPESQQFPDTENEEYHSDEQNDTQKQFCEEQNTGILHDEILIHEEKQIEVVEKMNSELSLSCKKERDFLHENSMLREEIAMLRLELDTMKHQSQLRKKKYLEDIESVKKKNDNLLKALQLNELTMDDDTAVLVIDNGSGMCKAGFAGDDAPRAVFPSIVGCPRQQGMMGGMHQKESYVGKEAQSKRGILTLKYPMEHGIITNWDDMEKIWHHTFYNELRVAPEEHPILLTEAPLNPKANREKMTQIMFETFNTPAMYVAIQAMLSLYTSGRTTGIVMDSGDGVTHTVPIYDGNALPHATLRLDLAGRELTDYLMKILTERGYRFTTMAEREIVRDIKEKLCYVALDFEQEMAMVASSSSLEKSYELPDGQVITISNEWFRCPEALFQPCFLGMESCGIHETTFNSIMKSDVDIRKDLYTNTVLSGGTTMYPGMAHRMQKEIAALAPSMMKIRIIAPPKRKYSVWVGGSILASLSTFQQMWISKQEYDESGPSIVHRKCF</sequence>
<protein>
    <recommendedName>
        <fullName>POTE ankyrin domain family member J</fullName>
    </recommendedName>
</protein>
<name>POTEJ_HUMAN</name>
<evidence type="ECO:0000255" key="1"/>
<evidence type="ECO:0000256" key="2">
    <source>
        <dbReference type="SAM" id="MobiDB-lite"/>
    </source>
</evidence>
<evidence type="ECO:0000305" key="3"/>
<feature type="chain" id="PRO_0000395414" description="POTE ankyrin domain family member J">
    <location>
        <begin position="1"/>
        <end position="1038"/>
    </location>
</feature>
<feature type="repeat" description="ANK 1">
    <location>
        <begin position="135"/>
        <end position="164"/>
    </location>
</feature>
<feature type="repeat" description="ANK 2">
    <location>
        <begin position="168"/>
        <end position="197"/>
    </location>
</feature>
<feature type="repeat" description="ANK 3">
    <location>
        <begin position="201"/>
        <end position="230"/>
    </location>
</feature>
<feature type="repeat" description="ANK 4">
    <location>
        <begin position="234"/>
        <end position="263"/>
    </location>
</feature>
<feature type="repeat" description="ANK 5">
    <location>
        <begin position="267"/>
        <end position="296"/>
    </location>
</feature>
<feature type="region of interest" description="Disordered" evidence="2">
    <location>
        <begin position="332"/>
        <end position="493"/>
    </location>
</feature>
<feature type="region of interest" description="Disordered" evidence="2">
    <location>
        <begin position="507"/>
        <end position="561"/>
    </location>
</feature>
<feature type="region of interest" description="Actin-like">
    <location>
        <begin position="666"/>
        <end position="1038"/>
    </location>
</feature>
<feature type="coiled-coil region" evidence="1">
    <location>
        <begin position="605"/>
        <end position="661"/>
    </location>
</feature>
<feature type="compositionally biased region" description="Basic and acidic residues" evidence="2">
    <location>
        <begin position="340"/>
        <end position="355"/>
    </location>
</feature>
<feature type="compositionally biased region" description="Basic and acidic residues" evidence="2">
    <location>
        <begin position="364"/>
        <end position="387"/>
    </location>
</feature>
<feature type="compositionally biased region" description="Basic and acidic residues" evidence="2">
    <location>
        <begin position="429"/>
        <end position="446"/>
    </location>
</feature>
<feature type="compositionally biased region" description="Polar residues" evidence="2">
    <location>
        <begin position="448"/>
        <end position="457"/>
    </location>
</feature>
<feature type="compositionally biased region" description="Basic and acidic residues" evidence="2">
    <location>
        <begin position="458"/>
        <end position="493"/>
    </location>
</feature>
<comment type="similarity">
    <text evidence="3">In the N-terminal section; belongs to the POTE family.</text>
</comment>
<comment type="similarity">
    <text evidence="3">In the C-terminal section; belongs to the actin family.</text>
</comment>
<accession>P0CG39</accession>
<keyword id="KW-0040">ANK repeat</keyword>
<keyword id="KW-0175">Coiled coil</keyword>
<keyword id="KW-1267">Proteomics identification</keyword>
<keyword id="KW-1185">Reference proteome</keyword>
<keyword id="KW-0677">Repeat</keyword>
<reference key="1">
    <citation type="journal article" date="2005" name="Nature">
        <title>Generation and annotation of the DNA sequences of human chromosomes 2 and 4.</title>
        <authorList>
            <person name="Hillier L.W."/>
            <person name="Graves T.A."/>
            <person name="Fulton R.S."/>
            <person name="Fulton L.A."/>
            <person name="Pepin K.H."/>
            <person name="Minx P."/>
            <person name="Wagner-McPherson C."/>
            <person name="Layman D."/>
            <person name="Wylie K."/>
            <person name="Sekhon M."/>
            <person name="Becker M.C."/>
            <person name="Fewell G.A."/>
            <person name="Delehaunty K.D."/>
            <person name="Miner T.L."/>
            <person name="Nash W.E."/>
            <person name="Kremitzki C."/>
            <person name="Oddy L."/>
            <person name="Du H."/>
            <person name="Sun H."/>
            <person name="Bradshaw-Cordum H."/>
            <person name="Ali J."/>
            <person name="Carter J."/>
            <person name="Cordes M."/>
            <person name="Harris A."/>
            <person name="Isak A."/>
            <person name="van Brunt A."/>
            <person name="Nguyen C."/>
            <person name="Du F."/>
            <person name="Courtney L."/>
            <person name="Kalicki J."/>
            <person name="Ozersky P."/>
            <person name="Abbott S."/>
            <person name="Armstrong J."/>
            <person name="Belter E.A."/>
            <person name="Caruso L."/>
            <person name="Cedroni M."/>
            <person name="Cotton M."/>
            <person name="Davidson T."/>
            <person name="Desai A."/>
            <person name="Elliott G."/>
            <person name="Erb T."/>
            <person name="Fronick C."/>
            <person name="Gaige T."/>
            <person name="Haakenson W."/>
            <person name="Haglund K."/>
            <person name="Holmes A."/>
            <person name="Harkins R."/>
            <person name="Kim K."/>
            <person name="Kruchowski S.S."/>
            <person name="Strong C.M."/>
            <person name="Grewal N."/>
            <person name="Goyea E."/>
            <person name="Hou S."/>
            <person name="Levy A."/>
            <person name="Martinka S."/>
            <person name="Mead K."/>
            <person name="McLellan M.D."/>
            <person name="Meyer R."/>
            <person name="Randall-Maher J."/>
            <person name="Tomlinson C."/>
            <person name="Dauphin-Kohlberg S."/>
            <person name="Kozlowicz-Reilly A."/>
            <person name="Shah N."/>
            <person name="Swearengen-Shahid S."/>
            <person name="Snider J."/>
            <person name="Strong J.T."/>
            <person name="Thompson J."/>
            <person name="Yoakum M."/>
            <person name="Leonard S."/>
            <person name="Pearman C."/>
            <person name="Trani L."/>
            <person name="Radionenko M."/>
            <person name="Waligorski J.E."/>
            <person name="Wang C."/>
            <person name="Rock S.M."/>
            <person name="Tin-Wollam A.-M."/>
            <person name="Maupin R."/>
            <person name="Latreille P."/>
            <person name="Wendl M.C."/>
            <person name="Yang S.-P."/>
            <person name="Pohl C."/>
            <person name="Wallis J.W."/>
            <person name="Spieth J."/>
            <person name="Bieri T.A."/>
            <person name="Berkowicz N."/>
            <person name="Nelson J.O."/>
            <person name="Osborne J."/>
            <person name="Ding L."/>
            <person name="Meyer R."/>
            <person name="Sabo A."/>
            <person name="Shotland Y."/>
            <person name="Sinha P."/>
            <person name="Wohldmann P.E."/>
            <person name="Cook L.L."/>
            <person name="Hickenbotham M.T."/>
            <person name="Eldred J."/>
            <person name="Williams D."/>
            <person name="Jones T.A."/>
            <person name="She X."/>
            <person name="Ciccarelli F.D."/>
            <person name="Izaurralde E."/>
            <person name="Taylor J."/>
            <person name="Schmutz J."/>
            <person name="Myers R.M."/>
            <person name="Cox D.R."/>
            <person name="Huang X."/>
            <person name="McPherson J.D."/>
            <person name="Mardis E.R."/>
            <person name="Clifton S.W."/>
            <person name="Warren W.C."/>
            <person name="Chinwalla A.T."/>
            <person name="Eddy S.R."/>
            <person name="Marra M.A."/>
            <person name="Ovcharenko I."/>
            <person name="Furey T.S."/>
            <person name="Miller W."/>
            <person name="Eichler E.E."/>
            <person name="Bork P."/>
            <person name="Suyama M."/>
            <person name="Torrents D."/>
            <person name="Waterston R.H."/>
            <person name="Wilson R.K."/>
        </authorList>
    </citation>
    <scope>NUCLEOTIDE SEQUENCE [LARGE SCALE GENOMIC DNA]</scope>
</reference>
<dbReference type="EMBL" id="AC140481">
    <property type="status" value="NOT_ANNOTATED_CDS"/>
    <property type="molecule type" value="Genomic_DNA"/>
</dbReference>
<dbReference type="CCDS" id="CCDS59432.1"/>
<dbReference type="RefSeq" id="NP_001264012.1">
    <property type="nucleotide sequence ID" value="NM_001277083.2"/>
</dbReference>
<dbReference type="SMR" id="P0CG39"/>
<dbReference type="BioGRID" id="576066">
    <property type="interactions" value="63"/>
</dbReference>
<dbReference type="FunCoup" id="P0CG39">
    <property type="interactions" value="67"/>
</dbReference>
<dbReference type="IntAct" id="P0CG39">
    <property type="interactions" value="11"/>
</dbReference>
<dbReference type="MINT" id="P0CG39"/>
<dbReference type="STRING" id="9606.ENSP00000387176"/>
<dbReference type="GlyGen" id="P0CG39">
    <property type="glycosylation" value="1 site, 1 O-linked glycan (1 site)"/>
</dbReference>
<dbReference type="iPTMnet" id="P0CG39"/>
<dbReference type="PhosphoSitePlus" id="P0CG39"/>
<dbReference type="SwissPalm" id="P0CG39"/>
<dbReference type="BioMuta" id="POTEJ"/>
<dbReference type="DMDM" id="300681052"/>
<dbReference type="jPOST" id="P0CG39"/>
<dbReference type="MassIVE" id="P0CG39"/>
<dbReference type="PaxDb" id="9606-ENSP00000387176"/>
<dbReference type="PeptideAtlas" id="P0CG39"/>
<dbReference type="PRIDE" id="P0CG39"/>
<dbReference type="ProteomicsDB" id="52469"/>
<dbReference type="Pumba" id="P0CG39"/>
<dbReference type="TopDownProteomics" id="P0CG39"/>
<dbReference type="Antibodypedia" id="68638">
    <property type="antibodies" value="15 antibodies from 4 providers"/>
</dbReference>
<dbReference type="DNASU" id="653781"/>
<dbReference type="Ensembl" id="ENST00000409602.2">
    <property type="protein sequence ID" value="ENSP00000387176.1"/>
    <property type="gene ID" value="ENSG00000222038.4"/>
</dbReference>
<dbReference type="GeneID" id="653781"/>
<dbReference type="KEGG" id="hsa:653781"/>
<dbReference type="MANE-Select" id="ENST00000409602.2">
    <property type="protein sequence ID" value="ENSP00000387176.1"/>
    <property type="RefSeq nucleotide sequence ID" value="NM_001277083.2"/>
    <property type="RefSeq protein sequence ID" value="NP_001264012.1"/>
</dbReference>
<dbReference type="UCSC" id="uc021vor.3">
    <property type="organism name" value="human"/>
</dbReference>
<dbReference type="AGR" id="HGNC:37094"/>
<dbReference type="CTD" id="653781"/>
<dbReference type="DisGeNET" id="653781"/>
<dbReference type="GeneCards" id="POTEJ"/>
<dbReference type="HGNC" id="HGNC:37094">
    <property type="gene designation" value="POTEJ"/>
</dbReference>
<dbReference type="HPA" id="ENSG00000222038">
    <property type="expression patterns" value="Not detected"/>
</dbReference>
<dbReference type="neXtProt" id="NX_P0CG39"/>
<dbReference type="OpenTargets" id="ENSG00000222038"/>
<dbReference type="PharmGKB" id="PA165697368"/>
<dbReference type="VEuPathDB" id="HostDB:ENSG00000222038"/>
<dbReference type="eggNOG" id="KOG0676">
    <property type="taxonomic scope" value="Eukaryota"/>
</dbReference>
<dbReference type="GeneTree" id="ENSGT00940000163068"/>
<dbReference type="HOGENOM" id="CLU_010163_0_0_1"/>
<dbReference type="InParanoid" id="P0CG39"/>
<dbReference type="OrthoDB" id="9460435at2759"/>
<dbReference type="PAN-GO" id="P0CG39">
    <property type="GO annotations" value="0 GO annotations based on evolutionary models"/>
</dbReference>
<dbReference type="PhylomeDB" id="P0CG39"/>
<dbReference type="TreeFam" id="TF354237"/>
<dbReference type="PathwayCommons" id="P0CG39"/>
<dbReference type="SignaLink" id="P0CG39"/>
<dbReference type="BioGRID-ORCS" id="653781">
    <property type="hits" value="227 hits in 1030 CRISPR screens"/>
</dbReference>
<dbReference type="ChiTaRS" id="POTEJ">
    <property type="organism name" value="human"/>
</dbReference>
<dbReference type="GenomeRNAi" id="653781"/>
<dbReference type="Pharos" id="P0CG39">
    <property type="development level" value="Tdark"/>
</dbReference>
<dbReference type="PRO" id="PR:P0CG39"/>
<dbReference type="Proteomes" id="UP000005640">
    <property type="component" value="Chromosome 2"/>
</dbReference>
<dbReference type="RNAct" id="P0CG39">
    <property type="molecule type" value="protein"/>
</dbReference>
<dbReference type="Bgee" id="ENSG00000222038">
    <property type="expression patterns" value="Expressed in male germ line stem cell (sensu Vertebrata) in testis and 11 other cell types or tissues"/>
</dbReference>
<dbReference type="GO" id="GO:0015629">
    <property type="term" value="C:actin cytoskeleton"/>
    <property type="evidence" value="ECO:0000318"/>
    <property type="project" value="GO_Central"/>
</dbReference>
<dbReference type="GO" id="GO:0005884">
    <property type="term" value="C:actin filament"/>
    <property type="evidence" value="ECO:0000318"/>
    <property type="project" value="GO_Central"/>
</dbReference>
<dbReference type="GO" id="GO:0030424">
    <property type="term" value="C:axon"/>
    <property type="evidence" value="ECO:0000318"/>
    <property type="project" value="GO_Central"/>
</dbReference>
<dbReference type="GO" id="GO:0005737">
    <property type="term" value="C:cytoplasm"/>
    <property type="evidence" value="ECO:0000318"/>
    <property type="project" value="GO_Central"/>
</dbReference>
<dbReference type="GO" id="GO:0070062">
    <property type="term" value="C:extracellular exosome"/>
    <property type="evidence" value="ECO:0007005"/>
    <property type="project" value="UniProtKB"/>
</dbReference>
<dbReference type="GO" id="GO:0005615">
    <property type="term" value="C:extracellular space"/>
    <property type="evidence" value="ECO:0007005"/>
    <property type="project" value="UniProtKB"/>
</dbReference>
<dbReference type="GO" id="GO:0016020">
    <property type="term" value="C:membrane"/>
    <property type="evidence" value="ECO:0000318"/>
    <property type="project" value="GO_Central"/>
</dbReference>
<dbReference type="GO" id="GO:0035267">
    <property type="term" value="C:NuA4 histone acetyltransferase complex"/>
    <property type="evidence" value="ECO:0000318"/>
    <property type="project" value="GO_Central"/>
</dbReference>
<dbReference type="GO" id="GO:0045202">
    <property type="term" value="C:synapse"/>
    <property type="evidence" value="ECO:0000318"/>
    <property type="project" value="GO_Central"/>
</dbReference>
<dbReference type="GO" id="GO:0019901">
    <property type="term" value="F:protein kinase binding"/>
    <property type="evidence" value="ECO:0000318"/>
    <property type="project" value="GO_Central"/>
</dbReference>
<dbReference type="GO" id="GO:0098973">
    <property type="term" value="F:structural constituent of postsynaptic actin cytoskeleton"/>
    <property type="evidence" value="ECO:0000318"/>
    <property type="project" value="GO_Central"/>
</dbReference>
<dbReference type="GO" id="GO:0007409">
    <property type="term" value="P:axonogenesis"/>
    <property type="evidence" value="ECO:0000318"/>
    <property type="project" value="GO_Central"/>
</dbReference>
<dbReference type="GO" id="GO:0048870">
    <property type="term" value="P:cell motility"/>
    <property type="evidence" value="ECO:0000318"/>
    <property type="project" value="GO_Central"/>
</dbReference>
<dbReference type="CDD" id="cd10224">
    <property type="entry name" value="ASKHA_NBD_actin"/>
    <property type="match status" value="1"/>
</dbReference>
<dbReference type="FunFam" id="3.30.420.40:FF:000291">
    <property type="entry name" value="Actin, alpha skeletal muscle"/>
    <property type="match status" value="1"/>
</dbReference>
<dbReference type="FunFam" id="3.90.640.10:FF:000001">
    <property type="entry name" value="Actin, muscle"/>
    <property type="match status" value="1"/>
</dbReference>
<dbReference type="FunFam" id="3.30.420.40:FF:000404">
    <property type="entry name" value="Major actin"/>
    <property type="match status" value="1"/>
</dbReference>
<dbReference type="FunFam" id="1.25.40.20:FF:000581">
    <property type="entry name" value="POTE ankyrin domain family member E"/>
    <property type="match status" value="1"/>
</dbReference>
<dbReference type="FunFam" id="3.30.420.40:FF:000058">
    <property type="entry name" value="Putative actin-related protein 5"/>
    <property type="match status" value="1"/>
</dbReference>
<dbReference type="Gene3D" id="3.30.420.40">
    <property type="match status" value="2"/>
</dbReference>
<dbReference type="Gene3D" id="3.90.640.10">
    <property type="entry name" value="Actin, Chain A, domain 4"/>
    <property type="match status" value="1"/>
</dbReference>
<dbReference type="Gene3D" id="1.25.40.20">
    <property type="entry name" value="Ankyrin repeat-containing domain"/>
    <property type="match status" value="1"/>
</dbReference>
<dbReference type="InterPro" id="IPR004000">
    <property type="entry name" value="Actin"/>
</dbReference>
<dbReference type="InterPro" id="IPR020902">
    <property type="entry name" value="Actin/actin-like_CS"/>
</dbReference>
<dbReference type="InterPro" id="IPR004001">
    <property type="entry name" value="Actin_CS"/>
</dbReference>
<dbReference type="InterPro" id="IPR002110">
    <property type="entry name" value="Ankyrin_rpt"/>
</dbReference>
<dbReference type="InterPro" id="IPR036770">
    <property type="entry name" value="Ankyrin_rpt-contain_sf"/>
</dbReference>
<dbReference type="InterPro" id="IPR043129">
    <property type="entry name" value="ATPase_NBD"/>
</dbReference>
<dbReference type="InterPro" id="IPR039497">
    <property type="entry name" value="CC144C-like_CC_dom"/>
</dbReference>
<dbReference type="PANTHER" id="PTHR11937">
    <property type="entry name" value="ACTIN"/>
    <property type="match status" value="1"/>
</dbReference>
<dbReference type="Pfam" id="PF00022">
    <property type="entry name" value="Actin"/>
    <property type="match status" value="1"/>
</dbReference>
<dbReference type="Pfam" id="PF12796">
    <property type="entry name" value="Ank_2"/>
    <property type="match status" value="2"/>
</dbReference>
<dbReference type="Pfam" id="PF14915">
    <property type="entry name" value="CCDC144C"/>
    <property type="match status" value="1"/>
</dbReference>
<dbReference type="PRINTS" id="PR00190">
    <property type="entry name" value="ACTIN"/>
</dbReference>
<dbReference type="SMART" id="SM00268">
    <property type="entry name" value="ACTIN"/>
    <property type="match status" value="1"/>
</dbReference>
<dbReference type="SMART" id="SM00248">
    <property type="entry name" value="ANK"/>
    <property type="match status" value="6"/>
</dbReference>
<dbReference type="SUPFAM" id="SSF53067">
    <property type="entry name" value="Actin-like ATPase domain"/>
    <property type="match status" value="2"/>
</dbReference>
<dbReference type="SUPFAM" id="SSF48403">
    <property type="entry name" value="Ankyrin repeat"/>
    <property type="match status" value="1"/>
</dbReference>
<dbReference type="PROSITE" id="PS00432">
    <property type="entry name" value="ACTINS_2"/>
    <property type="match status" value="1"/>
</dbReference>
<dbReference type="PROSITE" id="PS01132">
    <property type="entry name" value="ACTINS_ACT_LIKE"/>
    <property type="match status" value="1"/>
</dbReference>
<dbReference type="PROSITE" id="PS50297">
    <property type="entry name" value="ANK_REP_REGION"/>
    <property type="match status" value="1"/>
</dbReference>
<dbReference type="PROSITE" id="PS50088">
    <property type="entry name" value="ANK_REPEAT"/>
    <property type="match status" value="4"/>
</dbReference>
<gene>
    <name type="primary">POTEJ</name>
</gene>